<comment type="function">
    <text evidence="1">Catalyzes the methylthiolation of N6-(dimethylallyl)adenosine (i(6)A), leading to the formation of 2-methylthio-N6-(dimethylallyl)adenosine (ms(2)i(6)A) at position 37 in tRNAs that read codons beginning with uridine.</text>
</comment>
<comment type="catalytic activity">
    <reaction evidence="1">
        <text>N(6)-dimethylallyladenosine(37) in tRNA + (sulfur carrier)-SH + AH2 + 2 S-adenosyl-L-methionine = 2-methylsulfanyl-N(6)-dimethylallyladenosine(37) in tRNA + (sulfur carrier)-H + 5'-deoxyadenosine + L-methionine + A + S-adenosyl-L-homocysteine + 2 H(+)</text>
        <dbReference type="Rhea" id="RHEA:37067"/>
        <dbReference type="Rhea" id="RHEA-COMP:10375"/>
        <dbReference type="Rhea" id="RHEA-COMP:10376"/>
        <dbReference type="Rhea" id="RHEA-COMP:14737"/>
        <dbReference type="Rhea" id="RHEA-COMP:14739"/>
        <dbReference type="ChEBI" id="CHEBI:13193"/>
        <dbReference type="ChEBI" id="CHEBI:15378"/>
        <dbReference type="ChEBI" id="CHEBI:17319"/>
        <dbReference type="ChEBI" id="CHEBI:17499"/>
        <dbReference type="ChEBI" id="CHEBI:29917"/>
        <dbReference type="ChEBI" id="CHEBI:57844"/>
        <dbReference type="ChEBI" id="CHEBI:57856"/>
        <dbReference type="ChEBI" id="CHEBI:59789"/>
        <dbReference type="ChEBI" id="CHEBI:64428"/>
        <dbReference type="ChEBI" id="CHEBI:74415"/>
        <dbReference type="ChEBI" id="CHEBI:74417"/>
        <dbReference type="EC" id="2.8.4.3"/>
    </reaction>
</comment>
<comment type="cofactor">
    <cofactor evidence="1">
        <name>[4Fe-4S] cluster</name>
        <dbReference type="ChEBI" id="CHEBI:49883"/>
    </cofactor>
    <text evidence="1">Binds 2 [4Fe-4S] clusters. One cluster is coordinated with 3 cysteines and an exchangeable S-adenosyl-L-methionine.</text>
</comment>
<comment type="subunit">
    <text evidence="1">Monomer.</text>
</comment>
<comment type="subcellular location">
    <subcellularLocation>
        <location evidence="1">Cytoplasm</location>
    </subcellularLocation>
</comment>
<comment type="similarity">
    <text evidence="1">Belongs to the methylthiotransferase family. MiaB subfamily.</text>
</comment>
<dbReference type="EC" id="2.8.4.3" evidence="1"/>
<dbReference type="EMBL" id="CP000915">
    <property type="protein sequence ID" value="ACD30672.1"/>
    <property type="molecule type" value="Genomic_DNA"/>
</dbReference>
<dbReference type="SMR" id="B2SG13"/>
<dbReference type="KEGG" id="ftm:FTM_0693"/>
<dbReference type="HOGENOM" id="CLU_018697_2_0_6"/>
<dbReference type="GO" id="GO:0005829">
    <property type="term" value="C:cytosol"/>
    <property type="evidence" value="ECO:0007669"/>
    <property type="project" value="TreeGrafter"/>
</dbReference>
<dbReference type="GO" id="GO:0051539">
    <property type="term" value="F:4 iron, 4 sulfur cluster binding"/>
    <property type="evidence" value="ECO:0007669"/>
    <property type="project" value="UniProtKB-UniRule"/>
</dbReference>
<dbReference type="GO" id="GO:0046872">
    <property type="term" value="F:metal ion binding"/>
    <property type="evidence" value="ECO:0007669"/>
    <property type="project" value="UniProtKB-KW"/>
</dbReference>
<dbReference type="GO" id="GO:0035597">
    <property type="term" value="F:N6-isopentenyladenosine methylthiotransferase activity"/>
    <property type="evidence" value="ECO:0007669"/>
    <property type="project" value="TreeGrafter"/>
</dbReference>
<dbReference type="CDD" id="cd01335">
    <property type="entry name" value="Radical_SAM"/>
    <property type="match status" value="1"/>
</dbReference>
<dbReference type="FunFam" id="3.40.50.12160:FF:000001">
    <property type="entry name" value="tRNA-2-methylthio-N(6)-dimethylallyladenosine synthase"/>
    <property type="match status" value="1"/>
</dbReference>
<dbReference type="FunFam" id="3.80.30.20:FF:000001">
    <property type="entry name" value="tRNA-2-methylthio-N(6)-dimethylallyladenosine synthase 2"/>
    <property type="match status" value="1"/>
</dbReference>
<dbReference type="Gene3D" id="3.40.50.12160">
    <property type="entry name" value="Methylthiotransferase, N-terminal domain"/>
    <property type="match status" value="1"/>
</dbReference>
<dbReference type="Gene3D" id="3.80.30.20">
    <property type="entry name" value="tm_1862 like domain"/>
    <property type="match status" value="1"/>
</dbReference>
<dbReference type="HAMAP" id="MF_01864">
    <property type="entry name" value="tRNA_metthiotr_MiaB"/>
    <property type="match status" value="1"/>
</dbReference>
<dbReference type="InterPro" id="IPR006638">
    <property type="entry name" value="Elp3/MiaA/NifB-like_rSAM"/>
</dbReference>
<dbReference type="InterPro" id="IPR005839">
    <property type="entry name" value="Methylthiotransferase"/>
</dbReference>
<dbReference type="InterPro" id="IPR020612">
    <property type="entry name" value="Methylthiotransferase_CS"/>
</dbReference>
<dbReference type="InterPro" id="IPR013848">
    <property type="entry name" value="Methylthiotransferase_N"/>
</dbReference>
<dbReference type="InterPro" id="IPR038135">
    <property type="entry name" value="Methylthiotransferase_N_sf"/>
</dbReference>
<dbReference type="InterPro" id="IPR006463">
    <property type="entry name" value="MiaB_methiolase"/>
</dbReference>
<dbReference type="InterPro" id="IPR007197">
    <property type="entry name" value="rSAM"/>
</dbReference>
<dbReference type="InterPro" id="IPR023404">
    <property type="entry name" value="rSAM_horseshoe"/>
</dbReference>
<dbReference type="InterPro" id="IPR002792">
    <property type="entry name" value="TRAM_dom"/>
</dbReference>
<dbReference type="NCBIfam" id="TIGR01574">
    <property type="entry name" value="miaB-methiolase"/>
    <property type="match status" value="1"/>
</dbReference>
<dbReference type="NCBIfam" id="TIGR00089">
    <property type="entry name" value="MiaB/RimO family radical SAM methylthiotransferase"/>
    <property type="match status" value="1"/>
</dbReference>
<dbReference type="PANTHER" id="PTHR43020">
    <property type="entry name" value="CDK5 REGULATORY SUBUNIT-ASSOCIATED PROTEIN 1"/>
    <property type="match status" value="1"/>
</dbReference>
<dbReference type="PANTHER" id="PTHR43020:SF2">
    <property type="entry name" value="MITOCHONDRIAL TRNA METHYLTHIOTRANSFERASE CDK5RAP1"/>
    <property type="match status" value="1"/>
</dbReference>
<dbReference type="Pfam" id="PF04055">
    <property type="entry name" value="Radical_SAM"/>
    <property type="match status" value="1"/>
</dbReference>
<dbReference type="Pfam" id="PF01938">
    <property type="entry name" value="TRAM"/>
    <property type="match status" value="1"/>
</dbReference>
<dbReference type="Pfam" id="PF00919">
    <property type="entry name" value="UPF0004"/>
    <property type="match status" value="1"/>
</dbReference>
<dbReference type="SFLD" id="SFLDF00273">
    <property type="entry name" value="(dimethylallyl)adenosine_tRNA"/>
    <property type="match status" value="1"/>
</dbReference>
<dbReference type="SFLD" id="SFLDG01082">
    <property type="entry name" value="B12-binding_domain_containing"/>
    <property type="match status" value="1"/>
</dbReference>
<dbReference type="SFLD" id="SFLDS00029">
    <property type="entry name" value="Radical_SAM"/>
    <property type="match status" value="1"/>
</dbReference>
<dbReference type="SMART" id="SM00729">
    <property type="entry name" value="Elp3"/>
    <property type="match status" value="1"/>
</dbReference>
<dbReference type="SUPFAM" id="SSF102114">
    <property type="entry name" value="Radical SAM enzymes"/>
    <property type="match status" value="1"/>
</dbReference>
<dbReference type="PROSITE" id="PS51449">
    <property type="entry name" value="MTTASE_N"/>
    <property type="match status" value="1"/>
</dbReference>
<dbReference type="PROSITE" id="PS01278">
    <property type="entry name" value="MTTASE_RADICAL"/>
    <property type="match status" value="1"/>
</dbReference>
<dbReference type="PROSITE" id="PS51918">
    <property type="entry name" value="RADICAL_SAM"/>
    <property type="match status" value="1"/>
</dbReference>
<dbReference type="PROSITE" id="PS50926">
    <property type="entry name" value="TRAM"/>
    <property type="match status" value="1"/>
</dbReference>
<keyword id="KW-0004">4Fe-4S</keyword>
<keyword id="KW-0963">Cytoplasm</keyword>
<keyword id="KW-0408">Iron</keyword>
<keyword id="KW-0411">Iron-sulfur</keyword>
<keyword id="KW-0479">Metal-binding</keyword>
<keyword id="KW-0949">S-adenosyl-L-methionine</keyword>
<keyword id="KW-0808">Transferase</keyword>
<keyword id="KW-0819">tRNA processing</keyword>
<evidence type="ECO:0000255" key="1">
    <source>
        <dbReference type="HAMAP-Rule" id="MF_01864"/>
    </source>
</evidence>
<evidence type="ECO:0000255" key="2">
    <source>
        <dbReference type="PROSITE-ProRule" id="PRU01266"/>
    </source>
</evidence>
<reference key="1">
    <citation type="journal article" date="2009" name="PLoS Pathog.">
        <title>Molecular evolutionary consequences of niche restriction in Francisella tularensis, a facultative intracellular pathogen.</title>
        <authorList>
            <person name="Larsson P."/>
            <person name="Elfsmark D."/>
            <person name="Svensson K."/>
            <person name="Wikstroem P."/>
            <person name="Forsman M."/>
            <person name="Brettin T."/>
            <person name="Keim P."/>
            <person name="Johansson A."/>
        </authorList>
    </citation>
    <scope>NUCLEOTIDE SEQUENCE [LARGE SCALE GENOMIC DNA]</scope>
    <source>
        <strain>FSC147</strain>
    </source>
</reference>
<feature type="chain" id="PRO_0000374306" description="tRNA-2-methylthio-N(6)-dimethylallyladenosine synthase">
    <location>
        <begin position="1"/>
        <end position="442"/>
    </location>
</feature>
<feature type="domain" description="MTTase N-terminal" evidence="1">
    <location>
        <begin position="5"/>
        <end position="122"/>
    </location>
</feature>
<feature type="domain" description="Radical SAM core" evidence="2">
    <location>
        <begin position="145"/>
        <end position="378"/>
    </location>
</feature>
<feature type="domain" description="TRAM" evidence="1">
    <location>
        <begin position="380"/>
        <end position="442"/>
    </location>
</feature>
<feature type="binding site" evidence="1">
    <location>
        <position position="14"/>
    </location>
    <ligand>
        <name>[4Fe-4S] cluster</name>
        <dbReference type="ChEBI" id="CHEBI:49883"/>
        <label>1</label>
    </ligand>
</feature>
<feature type="binding site" evidence="1">
    <location>
        <position position="51"/>
    </location>
    <ligand>
        <name>[4Fe-4S] cluster</name>
        <dbReference type="ChEBI" id="CHEBI:49883"/>
        <label>1</label>
    </ligand>
</feature>
<feature type="binding site" evidence="1">
    <location>
        <position position="85"/>
    </location>
    <ligand>
        <name>[4Fe-4S] cluster</name>
        <dbReference type="ChEBI" id="CHEBI:49883"/>
        <label>1</label>
    </ligand>
</feature>
<feature type="binding site" evidence="1">
    <location>
        <position position="159"/>
    </location>
    <ligand>
        <name>[4Fe-4S] cluster</name>
        <dbReference type="ChEBI" id="CHEBI:49883"/>
        <label>2</label>
        <note>4Fe-4S-S-AdoMet</note>
    </ligand>
</feature>
<feature type="binding site" evidence="1">
    <location>
        <position position="163"/>
    </location>
    <ligand>
        <name>[4Fe-4S] cluster</name>
        <dbReference type="ChEBI" id="CHEBI:49883"/>
        <label>2</label>
        <note>4Fe-4S-S-AdoMet</note>
    </ligand>
</feature>
<feature type="binding site" evidence="1">
    <location>
        <position position="166"/>
    </location>
    <ligand>
        <name>[4Fe-4S] cluster</name>
        <dbReference type="ChEBI" id="CHEBI:49883"/>
        <label>2</label>
        <note>4Fe-4S-S-AdoMet</note>
    </ligand>
</feature>
<sequence>MKEQKKVFIKTLGCQMNEYDSARMHEVLNEHFDTVKTDDYKDADIILINTCSIREKAQEKVFHELGRWKGLKKTNEDLIIGVGGCVASQEGENIIKRAPFVDLVFGPQTIHRLPEMIKQKQKTQQSQVDISFPEVEKFDYLPEPKAEGAKAYVSIMEGCDKYCSYCVVPYTRGPEVNRPFEDVLAECAILAEQGVKEITLLGQNVNHYLGPMENGQTADLALLIHFIAEIDGIERIRFTTSHPVEFSQNLIDAYATVPELANHLHLPVQHGSDRILINMKRNHTILEFKQKIRKLRAIRPDITISSDFIVGFPGETEEDFQKLLDLVKEINFDQSFSFIYSKRPGTPAADLPDDTPMEVKKDRLKRLQDLLNSNAQIISRQMVGTNQRILVDGTSKKDDNILSGRTENNRVVNFKGDKSLIGQFAMVKITESLPNSLRGELI</sequence>
<organism>
    <name type="scientific">Francisella tularensis subsp. mediasiatica (strain FSC147)</name>
    <dbReference type="NCBI Taxonomy" id="441952"/>
    <lineage>
        <taxon>Bacteria</taxon>
        <taxon>Pseudomonadati</taxon>
        <taxon>Pseudomonadota</taxon>
        <taxon>Gammaproteobacteria</taxon>
        <taxon>Thiotrichales</taxon>
        <taxon>Francisellaceae</taxon>
        <taxon>Francisella</taxon>
    </lineage>
</organism>
<proteinExistence type="inferred from homology"/>
<protein>
    <recommendedName>
        <fullName evidence="1">tRNA-2-methylthio-N(6)-dimethylallyladenosine synthase</fullName>
        <ecNumber evidence="1">2.8.4.3</ecNumber>
    </recommendedName>
    <alternativeName>
        <fullName evidence="1">(Dimethylallyl)adenosine tRNA methylthiotransferase MiaB</fullName>
    </alternativeName>
    <alternativeName>
        <fullName evidence="1">tRNA-i(6)A37 methylthiotransferase</fullName>
    </alternativeName>
</protein>
<accession>B2SG13</accession>
<gene>
    <name evidence="1" type="primary">miaB</name>
    <name type="ordered locus">FTM_0693</name>
</gene>
<name>MIAB_FRATM</name>